<protein>
    <recommendedName>
        <fullName evidence="1">Crossover junction endodeoxyribonuclease RuvC</fullName>
        <ecNumber evidence="1">3.1.21.10</ecNumber>
    </recommendedName>
    <alternativeName>
        <fullName evidence="1">Holliday junction nuclease RuvC</fullName>
    </alternativeName>
    <alternativeName>
        <fullName evidence="1">Holliday junction resolvase RuvC</fullName>
    </alternativeName>
</protein>
<dbReference type="EC" id="3.1.21.10" evidence="1"/>
<dbReference type="EMBL" id="CP000438">
    <property type="protein sequence ID" value="ABJ10126.1"/>
    <property type="molecule type" value="Genomic_DNA"/>
</dbReference>
<dbReference type="RefSeq" id="WP_003112575.1">
    <property type="nucleotide sequence ID" value="NZ_CP034244.1"/>
</dbReference>
<dbReference type="SMR" id="Q02IC7"/>
<dbReference type="KEGG" id="pau:PA14_51800"/>
<dbReference type="PseudoCAP" id="PA14_51800"/>
<dbReference type="HOGENOM" id="CLU_091257_2_1_6"/>
<dbReference type="BioCyc" id="PAER208963:G1G74-4357-MONOMER"/>
<dbReference type="Proteomes" id="UP000000653">
    <property type="component" value="Chromosome"/>
</dbReference>
<dbReference type="GO" id="GO:0005737">
    <property type="term" value="C:cytoplasm"/>
    <property type="evidence" value="ECO:0007669"/>
    <property type="project" value="UniProtKB-SubCell"/>
</dbReference>
<dbReference type="GO" id="GO:0048476">
    <property type="term" value="C:Holliday junction resolvase complex"/>
    <property type="evidence" value="ECO:0007669"/>
    <property type="project" value="UniProtKB-UniRule"/>
</dbReference>
<dbReference type="GO" id="GO:0008821">
    <property type="term" value="F:crossover junction DNA endonuclease activity"/>
    <property type="evidence" value="ECO:0007669"/>
    <property type="project" value="UniProtKB-UniRule"/>
</dbReference>
<dbReference type="GO" id="GO:0003677">
    <property type="term" value="F:DNA binding"/>
    <property type="evidence" value="ECO:0007669"/>
    <property type="project" value="UniProtKB-KW"/>
</dbReference>
<dbReference type="GO" id="GO:0000287">
    <property type="term" value="F:magnesium ion binding"/>
    <property type="evidence" value="ECO:0007669"/>
    <property type="project" value="UniProtKB-UniRule"/>
</dbReference>
<dbReference type="GO" id="GO:0006310">
    <property type="term" value="P:DNA recombination"/>
    <property type="evidence" value="ECO:0007669"/>
    <property type="project" value="UniProtKB-UniRule"/>
</dbReference>
<dbReference type="GO" id="GO:0006281">
    <property type="term" value="P:DNA repair"/>
    <property type="evidence" value="ECO:0007669"/>
    <property type="project" value="UniProtKB-UniRule"/>
</dbReference>
<dbReference type="CDD" id="cd16962">
    <property type="entry name" value="RuvC"/>
    <property type="match status" value="1"/>
</dbReference>
<dbReference type="FunFam" id="3.30.420.10:FF:000002">
    <property type="entry name" value="Crossover junction endodeoxyribonuclease RuvC"/>
    <property type="match status" value="1"/>
</dbReference>
<dbReference type="Gene3D" id="3.30.420.10">
    <property type="entry name" value="Ribonuclease H-like superfamily/Ribonuclease H"/>
    <property type="match status" value="1"/>
</dbReference>
<dbReference type="HAMAP" id="MF_00034">
    <property type="entry name" value="RuvC"/>
    <property type="match status" value="1"/>
</dbReference>
<dbReference type="InterPro" id="IPR012337">
    <property type="entry name" value="RNaseH-like_sf"/>
</dbReference>
<dbReference type="InterPro" id="IPR036397">
    <property type="entry name" value="RNaseH_sf"/>
</dbReference>
<dbReference type="InterPro" id="IPR020563">
    <property type="entry name" value="X-over_junc_endoDNase_Mg_BS"/>
</dbReference>
<dbReference type="InterPro" id="IPR002176">
    <property type="entry name" value="X-over_junc_endoDNase_RuvC"/>
</dbReference>
<dbReference type="NCBIfam" id="TIGR00228">
    <property type="entry name" value="ruvC"/>
    <property type="match status" value="1"/>
</dbReference>
<dbReference type="PANTHER" id="PTHR30194">
    <property type="entry name" value="CROSSOVER JUNCTION ENDODEOXYRIBONUCLEASE RUVC"/>
    <property type="match status" value="1"/>
</dbReference>
<dbReference type="PANTHER" id="PTHR30194:SF3">
    <property type="entry name" value="CROSSOVER JUNCTION ENDODEOXYRIBONUCLEASE RUVC"/>
    <property type="match status" value="1"/>
</dbReference>
<dbReference type="Pfam" id="PF02075">
    <property type="entry name" value="RuvC"/>
    <property type="match status" value="1"/>
</dbReference>
<dbReference type="PRINTS" id="PR00696">
    <property type="entry name" value="RSOLVASERUVC"/>
</dbReference>
<dbReference type="SUPFAM" id="SSF53098">
    <property type="entry name" value="Ribonuclease H-like"/>
    <property type="match status" value="1"/>
</dbReference>
<dbReference type="PROSITE" id="PS01321">
    <property type="entry name" value="RUVC"/>
    <property type="match status" value="1"/>
</dbReference>
<feature type="chain" id="PRO_1000002800" description="Crossover junction endodeoxyribonuclease RuvC">
    <location>
        <begin position="1"/>
        <end position="174"/>
    </location>
</feature>
<feature type="active site" evidence="1">
    <location>
        <position position="8"/>
    </location>
</feature>
<feature type="active site" evidence="1">
    <location>
        <position position="67"/>
    </location>
</feature>
<feature type="active site" evidence="1">
    <location>
        <position position="139"/>
    </location>
</feature>
<feature type="binding site" evidence="1">
    <location>
        <position position="8"/>
    </location>
    <ligand>
        <name>Mg(2+)</name>
        <dbReference type="ChEBI" id="CHEBI:18420"/>
        <label>1</label>
    </ligand>
</feature>
<feature type="binding site" evidence="1">
    <location>
        <position position="67"/>
    </location>
    <ligand>
        <name>Mg(2+)</name>
        <dbReference type="ChEBI" id="CHEBI:18420"/>
        <label>2</label>
    </ligand>
</feature>
<feature type="binding site" evidence="1">
    <location>
        <position position="139"/>
    </location>
    <ligand>
        <name>Mg(2+)</name>
        <dbReference type="ChEBI" id="CHEBI:18420"/>
        <label>1</label>
    </ligand>
</feature>
<keyword id="KW-0963">Cytoplasm</keyword>
<keyword id="KW-0227">DNA damage</keyword>
<keyword id="KW-0233">DNA recombination</keyword>
<keyword id="KW-0234">DNA repair</keyword>
<keyword id="KW-0238">DNA-binding</keyword>
<keyword id="KW-0255">Endonuclease</keyword>
<keyword id="KW-0378">Hydrolase</keyword>
<keyword id="KW-0460">Magnesium</keyword>
<keyword id="KW-0479">Metal-binding</keyword>
<keyword id="KW-0540">Nuclease</keyword>
<comment type="function">
    <text evidence="1">The RuvA-RuvB-RuvC complex processes Holliday junction (HJ) DNA during genetic recombination and DNA repair. Endonuclease that resolves HJ intermediates. Cleaves cruciform DNA by making single-stranded nicks across the HJ at symmetrical positions within the homologous arms, yielding a 5'-phosphate and a 3'-hydroxyl group; requires a central core of homology in the junction. The consensus cleavage sequence is 5'-(A/T)TT(C/G)-3'. Cleavage occurs on the 3'-side of the TT dinucleotide at the point of strand exchange. HJ branch migration catalyzed by RuvA-RuvB allows RuvC to scan DNA until it finds its consensus sequence, where it cleaves and resolves the cruciform DNA.</text>
</comment>
<comment type="catalytic activity">
    <reaction evidence="1">
        <text>Endonucleolytic cleavage at a junction such as a reciprocal single-stranded crossover between two homologous DNA duplexes (Holliday junction).</text>
        <dbReference type="EC" id="3.1.21.10"/>
    </reaction>
</comment>
<comment type="cofactor">
    <cofactor evidence="1">
        <name>Mg(2+)</name>
        <dbReference type="ChEBI" id="CHEBI:18420"/>
    </cofactor>
    <text evidence="1">Binds 2 Mg(2+) ion per subunit.</text>
</comment>
<comment type="subunit">
    <text evidence="1">Homodimer which binds Holliday junction (HJ) DNA. The HJ becomes 2-fold symmetrical on binding to RuvC with unstacked arms; it has a different conformation from HJ DNA in complex with RuvA. In the full resolvosome a probable DNA-RuvA(4)-RuvB(12)-RuvC(2) complex forms which resolves the HJ.</text>
</comment>
<comment type="subcellular location">
    <subcellularLocation>
        <location evidence="1">Cytoplasm</location>
    </subcellularLocation>
</comment>
<comment type="similarity">
    <text evidence="1">Belongs to the RuvC family.</text>
</comment>
<evidence type="ECO:0000255" key="1">
    <source>
        <dbReference type="HAMAP-Rule" id="MF_00034"/>
    </source>
</evidence>
<proteinExistence type="inferred from homology"/>
<accession>Q02IC7</accession>
<sequence length="174" mass="18557">MTLILGIDPGSRITGFGVVRETARGCEYVASGCIRTGNGPLHERLHVVFRSVREVIRTHGPTALSIEQVFMARNADSALKLGQARGAAIVAAMEEGLSVAEYTASQVKQAVVGTGGADKQQVQMMVMHLLKLTQKPQIDASDALAIALCHAHTQQSLVPHGLVGARRRGGRLRL</sequence>
<name>RUVC_PSEAB</name>
<gene>
    <name evidence="1" type="primary">ruvC</name>
    <name type="ordered locus">PA14_51800</name>
</gene>
<reference key="1">
    <citation type="journal article" date="2006" name="Genome Biol.">
        <title>Genomic analysis reveals that Pseudomonas aeruginosa virulence is combinatorial.</title>
        <authorList>
            <person name="Lee D.G."/>
            <person name="Urbach J.M."/>
            <person name="Wu G."/>
            <person name="Liberati N.T."/>
            <person name="Feinbaum R.L."/>
            <person name="Miyata S."/>
            <person name="Diggins L.T."/>
            <person name="He J."/>
            <person name="Saucier M."/>
            <person name="Deziel E."/>
            <person name="Friedman L."/>
            <person name="Li L."/>
            <person name="Grills G."/>
            <person name="Montgomery K."/>
            <person name="Kucherlapati R."/>
            <person name="Rahme L.G."/>
            <person name="Ausubel F.M."/>
        </authorList>
    </citation>
    <scope>NUCLEOTIDE SEQUENCE [LARGE SCALE GENOMIC DNA]</scope>
    <source>
        <strain>UCBPP-PA14</strain>
    </source>
</reference>
<organism>
    <name type="scientific">Pseudomonas aeruginosa (strain UCBPP-PA14)</name>
    <dbReference type="NCBI Taxonomy" id="208963"/>
    <lineage>
        <taxon>Bacteria</taxon>
        <taxon>Pseudomonadati</taxon>
        <taxon>Pseudomonadota</taxon>
        <taxon>Gammaproteobacteria</taxon>
        <taxon>Pseudomonadales</taxon>
        <taxon>Pseudomonadaceae</taxon>
        <taxon>Pseudomonas</taxon>
    </lineage>
</organism>